<protein>
    <recommendedName>
        <fullName evidence="1">Carbamoyl phosphate synthase small chain</fullName>
        <ecNumber evidence="1">6.3.5.5</ecNumber>
    </recommendedName>
    <alternativeName>
        <fullName evidence="1">Carbamoyl phosphate synthetase glutamine chain</fullName>
    </alternativeName>
</protein>
<reference key="1">
    <citation type="journal article" date="2004" name="Proc. Natl. Acad. Sci. U.S.A.">
        <title>The louse-borne human pathogen Bartonella quintana is a genomic derivative of the zoonotic agent Bartonella henselae.</title>
        <authorList>
            <person name="Alsmark U.C.M."/>
            <person name="Frank A.C."/>
            <person name="Karlberg E.O."/>
            <person name="Legault B.-A."/>
            <person name="Ardell D.H."/>
            <person name="Canbaeck B."/>
            <person name="Eriksson A.-S."/>
            <person name="Naeslund A.K."/>
            <person name="Handley S.A."/>
            <person name="Huvet M."/>
            <person name="La Scola B."/>
            <person name="Holmberg M."/>
            <person name="Andersson S.G.E."/>
        </authorList>
    </citation>
    <scope>NUCLEOTIDE SEQUENCE [LARGE SCALE GENOMIC DNA]</scope>
    <source>
        <strain>Toulouse</strain>
    </source>
</reference>
<keyword id="KW-0028">Amino-acid biosynthesis</keyword>
<keyword id="KW-0055">Arginine biosynthesis</keyword>
<keyword id="KW-0067">ATP-binding</keyword>
<keyword id="KW-0315">Glutamine amidotransferase</keyword>
<keyword id="KW-0436">Ligase</keyword>
<keyword id="KW-0547">Nucleotide-binding</keyword>
<keyword id="KW-0665">Pyrimidine biosynthesis</keyword>
<comment type="function">
    <text evidence="1">Small subunit of the glutamine-dependent carbamoyl phosphate synthetase (CPSase). CPSase catalyzes the formation of carbamoyl phosphate from the ammonia moiety of glutamine, carbonate, and phosphate donated by ATP, constituting the first step of 2 biosynthetic pathways, one leading to arginine and/or urea and the other to pyrimidine nucleotides. The small subunit (glutamine amidotransferase) binds and cleaves glutamine to supply the large subunit with the substrate ammonia.</text>
</comment>
<comment type="catalytic activity">
    <reaction evidence="1">
        <text>hydrogencarbonate + L-glutamine + 2 ATP + H2O = carbamoyl phosphate + L-glutamate + 2 ADP + phosphate + 2 H(+)</text>
        <dbReference type="Rhea" id="RHEA:18633"/>
        <dbReference type="ChEBI" id="CHEBI:15377"/>
        <dbReference type="ChEBI" id="CHEBI:15378"/>
        <dbReference type="ChEBI" id="CHEBI:17544"/>
        <dbReference type="ChEBI" id="CHEBI:29985"/>
        <dbReference type="ChEBI" id="CHEBI:30616"/>
        <dbReference type="ChEBI" id="CHEBI:43474"/>
        <dbReference type="ChEBI" id="CHEBI:58228"/>
        <dbReference type="ChEBI" id="CHEBI:58359"/>
        <dbReference type="ChEBI" id="CHEBI:456216"/>
        <dbReference type="EC" id="6.3.5.5"/>
    </reaction>
</comment>
<comment type="catalytic activity">
    <molecule>Carbamoyl phosphate synthase small chain</molecule>
    <reaction evidence="1">
        <text>L-glutamine + H2O = L-glutamate + NH4(+)</text>
        <dbReference type="Rhea" id="RHEA:15889"/>
        <dbReference type="ChEBI" id="CHEBI:15377"/>
        <dbReference type="ChEBI" id="CHEBI:28938"/>
        <dbReference type="ChEBI" id="CHEBI:29985"/>
        <dbReference type="ChEBI" id="CHEBI:58359"/>
    </reaction>
</comment>
<comment type="pathway">
    <text evidence="1">Amino-acid biosynthesis; L-arginine biosynthesis; carbamoyl phosphate from bicarbonate: step 1/1.</text>
</comment>
<comment type="pathway">
    <text evidence="1">Pyrimidine metabolism; UMP biosynthesis via de novo pathway; (S)-dihydroorotate from bicarbonate: step 1/3.</text>
</comment>
<comment type="subunit">
    <text evidence="1">Composed of two chains; the small (or glutamine) chain promotes the hydrolysis of glutamine to ammonia, which is used by the large (or ammonia) chain to synthesize carbamoyl phosphate. Tetramer of heterodimers (alpha,beta)4.</text>
</comment>
<comment type="similarity">
    <text evidence="1">Belongs to the CarA family.</text>
</comment>
<sequence>MTQTIPSPNPWSISRPTALLILADGTVIEGKGAGATGVAEGEICFNTAMTGYEEILTDPSYKKQIINFTFPHIGNVGTNSEDIEDLTPLNCHGAVGAIFKADITYPSNYRANENLNQWLKTRKIIALCGVDTRALTVLIREKGSLNGIIIHDPNGNFDIHALKKHAQKWTGLINLDLAKEVTSKQFVEWNEKPWVWNKGYSTNDACNFHIVAIDYGIKRNILRLMAAHGARITIVPANTNVEKILAMNPDGVFLSNGPGDPTATANYAVPTIQALIDSNIPLFGICLGHQLLALAVGAKTIKMHQGHHGANHPVKDFITRKVEIASMNHGFAVETTSLPEHVEETHISLFDNSNCGLRIIGKPVFSVQHHPEASPGPQDSHYLFQRFFNLIMDYKRTA</sequence>
<organism>
    <name type="scientific">Bartonella quintana (strain Toulouse)</name>
    <name type="common">Rochalimaea quintana</name>
    <dbReference type="NCBI Taxonomy" id="283165"/>
    <lineage>
        <taxon>Bacteria</taxon>
        <taxon>Pseudomonadati</taxon>
        <taxon>Pseudomonadota</taxon>
        <taxon>Alphaproteobacteria</taxon>
        <taxon>Hyphomicrobiales</taxon>
        <taxon>Bartonellaceae</taxon>
        <taxon>Bartonella</taxon>
    </lineage>
</organism>
<evidence type="ECO:0000255" key="1">
    <source>
        <dbReference type="HAMAP-Rule" id="MF_01209"/>
    </source>
</evidence>
<feature type="chain" id="PRO_1000138850" description="Carbamoyl phosphate synthase small chain">
    <location>
        <begin position="1"/>
        <end position="398"/>
    </location>
</feature>
<feature type="domain" description="Glutamine amidotransferase type-1" evidence="1">
    <location>
        <begin position="209"/>
        <end position="397"/>
    </location>
</feature>
<feature type="region of interest" description="CPSase" evidence="1">
    <location>
        <begin position="1"/>
        <end position="207"/>
    </location>
</feature>
<feature type="region of interest" description="CPSase">
    <location>
        <begin position="1"/>
        <end position="205"/>
    </location>
</feature>
<feature type="active site" description="Nucleophile" evidence="1">
    <location>
        <position position="286"/>
    </location>
</feature>
<feature type="active site" evidence="1">
    <location>
        <position position="370"/>
    </location>
</feature>
<feature type="active site" evidence="1">
    <location>
        <position position="372"/>
    </location>
</feature>
<feature type="binding site" evidence="1">
    <location>
        <position position="60"/>
    </location>
    <ligand>
        <name>L-glutamine</name>
        <dbReference type="ChEBI" id="CHEBI:58359"/>
    </ligand>
</feature>
<feature type="binding site" evidence="1">
    <location>
        <position position="257"/>
    </location>
    <ligand>
        <name>L-glutamine</name>
        <dbReference type="ChEBI" id="CHEBI:58359"/>
    </ligand>
</feature>
<feature type="binding site" evidence="1">
    <location>
        <position position="259"/>
    </location>
    <ligand>
        <name>L-glutamine</name>
        <dbReference type="ChEBI" id="CHEBI:58359"/>
    </ligand>
</feature>
<feature type="binding site" evidence="1">
    <location>
        <position position="287"/>
    </location>
    <ligand>
        <name>L-glutamine</name>
        <dbReference type="ChEBI" id="CHEBI:58359"/>
    </ligand>
</feature>
<feature type="binding site" evidence="1">
    <location>
        <position position="290"/>
    </location>
    <ligand>
        <name>L-glutamine</name>
        <dbReference type="ChEBI" id="CHEBI:58359"/>
    </ligand>
</feature>
<feature type="binding site" evidence="1">
    <location>
        <position position="328"/>
    </location>
    <ligand>
        <name>L-glutamine</name>
        <dbReference type="ChEBI" id="CHEBI:58359"/>
    </ligand>
</feature>
<feature type="binding site" evidence="1">
    <location>
        <position position="330"/>
    </location>
    <ligand>
        <name>L-glutamine</name>
        <dbReference type="ChEBI" id="CHEBI:58359"/>
    </ligand>
</feature>
<feature type="binding site" evidence="1">
    <location>
        <position position="331"/>
    </location>
    <ligand>
        <name>L-glutamine</name>
        <dbReference type="ChEBI" id="CHEBI:58359"/>
    </ligand>
</feature>
<accession>Q6FZ66</accession>
<gene>
    <name evidence="1" type="primary">carA</name>
    <name type="ordered locus">BQ09220</name>
</gene>
<dbReference type="EC" id="6.3.5.5" evidence="1"/>
<dbReference type="EMBL" id="BX897700">
    <property type="protein sequence ID" value="CAF26399.1"/>
    <property type="molecule type" value="Genomic_DNA"/>
</dbReference>
<dbReference type="RefSeq" id="WP_011179628.1">
    <property type="nucleotide sequence ID" value="NC_005955.1"/>
</dbReference>
<dbReference type="SMR" id="Q6FZ66"/>
<dbReference type="KEGG" id="bqu:BQ09220"/>
<dbReference type="eggNOG" id="COG0505">
    <property type="taxonomic scope" value="Bacteria"/>
</dbReference>
<dbReference type="HOGENOM" id="CLU_035901_2_2_5"/>
<dbReference type="OrthoDB" id="9804328at2"/>
<dbReference type="UniPathway" id="UPA00068">
    <property type="reaction ID" value="UER00171"/>
</dbReference>
<dbReference type="UniPathway" id="UPA00070">
    <property type="reaction ID" value="UER00115"/>
</dbReference>
<dbReference type="Proteomes" id="UP000000597">
    <property type="component" value="Chromosome"/>
</dbReference>
<dbReference type="GO" id="GO:0005524">
    <property type="term" value="F:ATP binding"/>
    <property type="evidence" value="ECO:0007669"/>
    <property type="project" value="UniProtKB-UniRule"/>
</dbReference>
<dbReference type="GO" id="GO:0004088">
    <property type="term" value="F:carbamoyl-phosphate synthase (glutamine-hydrolyzing) activity"/>
    <property type="evidence" value="ECO:0007669"/>
    <property type="project" value="UniProtKB-UniRule"/>
</dbReference>
<dbReference type="GO" id="GO:0004359">
    <property type="term" value="F:glutaminase activity"/>
    <property type="evidence" value="ECO:0007669"/>
    <property type="project" value="RHEA"/>
</dbReference>
<dbReference type="GO" id="GO:0006207">
    <property type="term" value="P:'de novo' pyrimidine nucleobase biosynthetic process"/>
    <property type="evidence" value="ECO:0007669"/>
    <property type="project" value="InterPro"/>
</dbReference>
<dbReference type="GO" id="GO:0044205">
    <property type="term" value="P:'de novo' UMP biosynthetic process"/>
    <property type="evidence" value="ECO:0007669"/>
    <property type="project" value="UniProtKB-UniRule"/>
</dbReference>
<dbReference type="GO" id="GO:0006541">
    <property type="term" value="P:glutamine metabolic process"/>
    <property type="evidence" value="ECO:0007669"/>
    <property type="project" value="InterPro"/>
</dbReference>
<dbReference type="GO" id="GO:0006526">
    <property type="term" value="P:L-arginine biosynthetic process"/>
    <property type="evidence" value="ECO:0007669"/>
    <property type="project" value="UniProtKB-UniRule"/>
</dbReference>
<dbReference type="CDD" id="cd01744">
    <property type="entry name" value="GATase1_CPSase"/>
    <property type="match status" value="1"/>
</dbReference>
<dbReference type="Gene3D" id="3.40.50.880">
    <property type="match status" value="1"/>
</dbReference>
<dbReference type="Gene3D" id="3.50.30.20">
    <property type="entry name" value="Carbamoyl-phosphate synthase small subunit, N-terminal domain"/>
    <property type="match status" value="1"/>
</dbReference>
<dbReference type="HAMAP" id="MF_01209">
    <property type="entry name" value="CPSase_S_chain"/>
    <property type="match status" value="1"/>
</dbReference>
<dbReference type="InterPro" id="IPR050472">
    <property type="entry name" value="Anth_synth/Amidotransfase"/>
</dbReference>
<dbReference type="InterPro" id="IPR006274">
    <property type="entry name" value="CarbamoylP_synth_ssu"/>
</dbReference>
<dbReference type="InterPro" id="IPR002474">
    <property type="entry name" value="CarbamoylP_synth_ssu_N"/>
</dbReference>
<dbReference type="InterPro" id="IPR036480">
    <property type="entry name" value="CarbP_synth_ssu_N_sf"/>
</dbReference>
<dbReference type="InterPro" id="IPR029062">
    <property type="entry name" value="Class_I_gatase-like"/>
</dbReference>
<dbReference type="InterPro" id="IPR035686">
    <property type="entry name" value="CPSase_GATase1"/>
</dbReference>
<dbReference type="InterPro" id="IPR017926">
    <property type="entry name" value="GATASE"/>
</dbReference>
<dbReference type="NCBIfam" id="TIGR01368">
    <property type="entry name" value="CPSaseIIsmall"/>
    <property type="match status" value="1"/>
</dbReference>
<dbReference type="NCBIfam" id="NF009475">
    <property type="entry name" value="PRK12838.1"/>
    <property type="match status" value="1"/>
</dbReference>
<dbReference type="PANTHER" id="PTHR43418:SF7">
    <property type="entry name" value="CARBAMOYL-PHOSPHATE SYNTHASE SMALL CHAIN"/>
    <property type="match status" value="1"/>
</dbReference>
<dbReference type="PANTHER" id="PTHR43418">
    <property type="entry name" value="MULTIFUNCTIONAL TRYPTOPHAN BIOSYNTHESIS PROTEIN-RELATED"/>
    <property type="match status" value="1"/>
</dbReference>
<dbReference type="Pfam" id="PF00988">
    <property type="entry name" value="CPSase_sm_chain"/>
    <property type="match status" value="1"/>
</dbReference>
<dbReference type="Pfam" id="PF00117">
    <property type="entry name" value="GATase"/>
    <property type="match status" value="1"/>
</dbReference>
<dbReference type="PRINTS" id="PR00097">
    <property type="entry name" value="ANTSNTHASEII"/>
</dbReference>
<dbReference type="PRINTS" id="PR00099">
    <property type="entry name" value="CPSGATASE"/>
</dbReference>
<dbReference type="PRINTS" id="PR00096">
    <property type="entry name" value="GATASE"/>
</dbReference>
<dbReference type="SMART" id="SM01097">
    <property type="entry name" value="CPSase_sm_chain"/>
    <property type="match status" value="1"/>
</dbReference>
<dbReference type="SUPFAM" id="SSF52021">
    <property type="entry name" value="Carbamoyl phosphate synthetase, small subunit N-terminal domain"/>
    <property type="match status" value="1"/>
</dbReference>
<dbReference type="SUPFAM" id="SSF52317">
    <property type="entry name" value="Class I glutamine amidotransferase-like"/>
    <property type="match status" value="1"/>
</dbReference>
<dbReference type="PROSITE" id="PS51273">
    <property type="entry name" value="GATASE_TYPE_1"/>
    <property type="match status" value="1"/>
</dbReference>
<name>CARA_BARQU</name>
<proteinExistence type="inferred from homology"/>